<name>SYFA_SALTI</name>
<protein>
    <recommendedName>
        <fullName evidence="1">Phenylalanine--tRNA ligase alpha subunit</fullName>
        <ecNumber evidence="1">6.1.1.20</ecNumber>
    </recommendedName>
    <alternativeName>
        <fullName evidence="1">Phenylalanyl-tRNA synthetase alpha subunit</fullName>
        <shortName evidence="1">PheRS</shortName>
    </alternativeName>
</protein>
<accession>P67039</accession>
<accession>Q8XGJ3</accession>
<sequence>MSHLAELVANAAAAINQASDVAALDNVRVEYLGKKGHLTLQMTTLRDLPPEERPAAGAVINAAKEQVQQALNARKAELESAALNARLAAETIDISLPGRRIENGGLHPVTRTIDRIESFFGELGFTVATGPEIEDDYHNFDALNIPGHHPARADHDTFWFDATRLLRTQTSGVQIRTMKAQQPPIRIIAPGRVYRNDYDQTHTPMFHQMEGLIVDTNISFTNLKGTLHDFLRNFFEEDLQIRFRPSYFPFTEPSAEVDVMGKNGKWLEVLGCGMVHPNVLRNVGIDPEIYSGFAFGMGMERLTMLRYGVTDLRSFFENDLRFLKQFK</sequence>
<comment type="catalytic activity">
    <reaction evidence="1">
        <text>tRNA(Phe) + L-phenylalanine + ATP = L-phenylalanyl-tRNA(Phe) + AMP + diphosphate + H(+)</text>
        <dbReference type="Rhea" id="RHEA:19413"/>
        <dbReference type="Rhea" id="RHEA-COMP:9668"/>
        <dbReference type="Rhea" id="RHEA-COMP:9699"/>
        <dbReference type="ChEBI" id="CHEBI:15378"/>
        <dbReference type="ChEBI" id="CHEBI:30616"/>
        <dbReference type="ChEBI" id="CHEBI:33019"/>
        <dbReference type="ChEBI" id="CHEBI:58095"/>
        <dbReference type="ChEBI" id="CHEBI:78442"/>
        <dbReference type="ChEBI" id="CHEBI:78531"/>
        <dbReference type="ChEBI" id="CHEBI:456215"/>
        <dbReference type="EC" id="6.1.1.20"/>
    </reaction>
</comment>
<comment type="cofactor">
    <cofactor evidence="1">
        <name>Mg(2+)</name>
        <dbReference type="ChEBI" id="CHEBI:18420"/>
    </cofactor>
    <text evidence="1">Binds 2 magnesium ions per tetramer.</text>
</comment>
<comment type="subunit">
    <text evidence="1">Tetramer of two alpha and two beta subunits.</text>
</comment>
<comment type="subcellular location">
    <subcellularLocation>
        <location evidence="1">Cytoplasm</location>
    </subcellularLocation>
</comment>
<comment type="similarity">
    <text evidence="1">Belongs to the class-II aminoacyl-tRNA synthetase family. Phe-tRNA synthetase alpha subunit type 1 subfamily.</text>
</comment>
<reference key="1">
    <citation type="journal article" date="2001" name="Nature">
        <title>Complete genome sequence of a multiple drug resistant Salmonella enterica serovar Typhi CT18.</title>
        <authorList>
            <person name="Parkhill J."/>
            <person name="Dougan G."/>
            <person name="James K.D."/>
            <person name="Thomson N.R."/>
            <person name="Pickard D."/>
            <person name="Wain J."/>
            <person name="Churcher C.M."/>
            <person name="Mungall K.L."/>
            <person name="Bentley S.D."/>
            <person name="Holden M.T.G."/>
            <person name="Sebaihia M."/>
            <person name="Baker S."/>
            <person name="Basham D."/>
            <person name="Brooks K."/>
            <person name="Chillingworth T."/>
            <person name="Connerton P."/>
            <person name="Cronin A."/>
            <person name="Davis P."/>
            <person name="Davies R.M."/>
            <person name="Dowd L."/>
            <person name="White N."/>
            <person name="Farrar J."/>
            <person name="Feltwell T."/>
            <person name="Hamlin N."/>
            <person name="Haque A."/>
            <person name="Hien T.T."/>
            <person name="Holroyd S."/>
            <person name="Jagels K."/>
            <person name="Krogh A."/>
            <person name="Larsen T.S."/>
            <person name="Leather S."/>
            <person name="Moule S."/>
            <person name="O'Gaora P."/>
            <person name="Parry C."/>
            <person name="Quail M.A."/>
            <person name="Rutherford K.M."/>
            <person name="Simmonds M."/>
            <person name="Skelton J."/>
            <person name="Stevens K."/>
            <person name="Whitehead S."/>
            <person name="Barrell B.G."/>
        </authorList>
    </citation>
    <scope>NUCLEOTIDE SEQUENCE [LARGE SCALE GENOMIC DNA]</scope>
    <source>
        <strain>CT18</strain>
    </source>
</reference>
<reference key="2">
    <citation type="journal article" date="2003" name="J. Bacteriol.">
        <title>Comparative genomics of Salmonella enterica serovar Typhi strains Ty2 and CT18.</title>
        <authorList>
            <person name="Deng W."/>
            <person name="Liou S.-R."/>
            <person name="Plunkett G. III"/>
            <person name="Mayhew G.F."/>
            <person name="Rose D.J."/>
            <person name="Burland V."/>
            <person name="Kodoyianni V."/>
            <person name="Schwartz D.C."/>
            <person name="Blattner F.R."/>
        </authorList>
    </citation>
    <scope>NUCLEOTIDE SEQUENCE [LARGE SCALE GENOMIC DNA]</scope>
    <source>
        <strain>ATCC 700931 / Ty2</strain>
    </source>
</reference>
<keyword id="KW-0030">Aminoacyl-tRNA synthetase</keyword>
<keyword id="KW-0067">ATP-binding</keyword>
<keyword id="KW-0963">Cytoplasm</keyword>
<keyword id="KW-0436">Ligase</keyword>
<keyword id="KW-0460">Magnesium</keyword>
<keyword id="KW-0479">Metal-binding</keyword>
<keyword id="KW-0547">Nucleotide-binding</keyword>
<keyword id="KW-0648">Protein biosynthesis</keyword>
<gene>
    <name evidence="1" type="primary">pheS</name>
    <name type="ordered locus">STY1773</name>
    <name type="ordered locus">t1218</name>
</gene>
<organism>
    <name type="scientific">Salmonella typhi</name>
    <dbReference type="NCBI Taxonomy" id="90370"/>
    <lineage>
        <taxon>Bacteria</taxon>
        <taxon>Pseudomonadati</taxon>
        <taxon>Pseudomonadota</taxon>
        <taxon>Gammaproteobacteria</taxon>
        <taxon>Enterobacterales</taxon>
        <taxon>Enterobacteriaceae</taxon>
        <taxon>Salmonella</taxon>
    </lineage>
</organism>
<dbReference type="EC" id="6.1.1.20" evidence="1"/>
<dbReference type="EMBL" id="AL513382">
    <property type="protein sequence ID" value="CAD02015.1"/>
    <property type="molecule type" value="Genomic_DNA"/>
</dbReference>
<dbReference type="EMBL" id="AE014613">
    <property type="protein sequence ID" value="AAO68873.1"/>
    <property type="molecule type" value="Genomic_DNA"/>
</dbReference>
<dbReference type="RefSeq" id="NP_456174.1">
    <property type="nucleotide sequence ID" value="NC_003198.1"/>
</dbReference>
<dbReference type="RefSeq" id="WP_000018570.1">
    <property type="nucleotide sequence ID" value="NZ_WSUR01000011.1"/>
</dbReference>
<dbReference type="SMR" id="P67039"/>
<dbReference type="STRING" id="220341.gene:17585707"/>
<dbReference type="KEGG" id="stt:t1218"/>
<dbReference type="KEGG" id="sty:STY1773"/>
<dbReference type="PATRIC" id="fig|220341.7.peg.1785"/>
<dbReference type="eggNOG" id="COG0016">
    <property type="taxonomic scope" value="Bacteria"/>
</dbReference>
<dbReference type="HOGENOM" id="CLU_025086_0_1_6"/>
<dbReference type="OMA" id="EIMGCGM"/>
<dbReference type="OrthoDB" id="9800719at2"/>
<dbReference type="Proteomes" id="UP000000541">
    <property type="component" value="Chromosome"/>
</dbReference>
<dbReference type="Proteomes" id="UP000002670">
    <property type="component" value="Chromosome"/>
</dbReference>
<dbReference type="GO" id="GO:0005737">
    <property type="term" value="C:cytoplasm"/>
    <property type="evidence" value="ECO:0007669"/>
    <property type="project" value="UniProtKB-SubCell"/>
</dbReference>
<dbReference type="GO" id="GO:0005524">
    <property type="term" value="F:ATP binding"/>
    <property type="evidence" value="ECO:0007669"/>
    <property type="project" value="UniProtKB-UniRule"/>
</dbReference>
<dbReference type="GO" id="GO:0000287">
    <property type="term" value="F:magnesium ion binding"/>
    <property type="evidence" value="ECO:0007669"/>
    <property type="project" value="UniProtKB-UniRule"/>
</dbReference>
<dbReference type="GO" id="GO:0004826">
    <property type="term" value="F:phenylalanine-tRNA ligase activity"/>
    <property type="evidence" value="ECO:0007669"/>
    <property type="project" value="UniProtKB-UniRule"/>
</dbReference>
<dbReference type="GO" id="GO:0000049">
    <property type="term" value="F:tRNA binding"/>
    <property type="evidence" value="ECO:0007669"/>
    <property type="project" value="InterPro"/>
</dbReference>
<dbReference type="GO" id="GO:0006432">
    <property type="term" value="P:phenylalanyl-tRNA aminoacylation"/>
    <property type="evidence" value="ECO:0007669"/>
    <property type="project" value="UniProtKB-UniRule"/>
</dbReference>
<dbReference type="CDD" id="cd00496">
    <property type="entry name" value="PheRS_alpha_core"/>
    <property type="match status" value="1"/>
</dbReference>
<dbReference type="FunFam" id="3.30.930.10:FF:000003">
    <property type="entry name" value="Phenylalanine--tRNA ligase alpha subunit"/>
    <property type="match status" value="1"/>
</dbReference>
<dbReference type="Gene3D" id="3.30.930.10">
    <property type="entry name" value="Bira Bifunctional Protein, Domain 2"/>
    <property type="match status" value="1"/>
</dbReference>
<dbReference type="HAMAP" id="MF_00281">
    <property type="entry name" value="Phe_tRNA_synth_alpha1"/>
    <property type="match status" value="1"/>
</dbReference>
<dbReference type="InterPro" id="IPR006195">
    <property type="entry name" value="aa-tRNA-synth_II"/>
</dbReference>
<dbReference type="InterPro" id="IPR045864">
    <property type="entry name" value="aa-tRNA-synth_II/BPL/LPL"/>
</dbReference>
<dbReference type="InterPro" id="IPR004529">
    <property type="entry name" value="Phe-tRNA-synth_IIc_asu"/>
</dbReference>
<dbReference type="InterPro" id="IPR004188">
    <property type="entry name" value="Phe-tRNA_ligase_II_N"/>
</dbReference>
<dbReference type="InterPro" id="IPR022911">
    <property type="entry name" value="Phe_tRNA_ligase_alpha1_bac"/>
</dbReference>
<dbReference type="InterPro" id="IPR002319">
    <property type="entry name" value="Phenylalanyl-tRNA_Synthase"/>
</dbReference>
<dbReference type="InterPro" id="IPR010978">
    <property type="entry name" value="tRNA-bd_arm"/>
</dbReference>
<dbReference type="NCBIfam" id="TIGR00468">
    <property type="entry name" value="pheS"/>
    <property type="match status" value="1"/>
</dbReference>
<dbReference type="PANTHER" id="PTHR11538:SF41">
    <property type="entry name" value="PHENYLALANINE--TRNA LIGASE, MITOCHONDRIAL"/>
    <property type="match status" value="1"/>
</dbReference>
<dbReference type="PANTHER" id="PTHR11538">
    <property type="entry name" value="PHENYLALANYL-TRNA SYNTHETASE"/>
    <property type="match status" value="1"/>
</dbReference>
<dbReference type="Pfam" id="PF02912">
    <property type="entry name" value="Phe_tRNA-synt_N"/>
    <property type="match status" value="1"/>
</dbReference>
<dbReference type="Pfam" id="PF01409">
    <property type="entry name" value="tRNA-synt_2d"/>
    <property type="match status" value="1"/>
</dbReference>
<dbReference type="SUPFAM" id="SSF55681">
    <property type="entry name" value="Class II aaRS and biotin synthetases"/>
    <property type="match status" value="1"/>
</dbReference>
<dbReference type="SUPFAM" id="SSF46589">
    <property type="entry name" value="tRNA-binding arm"/>
    <property type="match status" value="1"/>
</dbReference>
<dbReference type="PROSITE" id="PS50862">
    <property type="entry name" value="AA_TRNA_LIGASE_II"/>
    <property type="match status" value="1"/>
</dbReference>
<proteinExistence type="inferred from homology"/>
<feature type="chain" id="PRO_0000126756" description="Phenylalanine--tRNA ligase alpha subunit">
    <location>
        <begin position="1"/>
        <end position="327"/>
    </location>
</feature>
<feature type="binding site" evidence="1">
    <location>
        <position position="252"/>
    </location>
    <ligand>
        <name>Mg(2+)</name>
        <dbReference type="ChEBI" id="CHEBI:18420"/>
        <note>shared with beta subunit</note>
    </ligand>
</feature>
<evidence type="ECO:0000255" key="1">
    <source>
        <dbReference type="HAMAP-Rule" id="MF_00281"/>
    </source>
</evidence>